<feature type="chain" id="PRO_0000315922" description="Glutathione transporter 1">
    <location>
        <begin position="1"/>
        <end position="851"/>
    </location>
</feature>
<feature type="transmembrane region" description="Helical" evidence="1">
    <location>
        <begin position="156"/>
        <end position="176"/>
    </location>
</feature>
<feature type="transmembrane region" description="Helical" evidence="1">
    <location>
        <begin position="179"/>
        <end position="199"/>
    </location>
</feature>
<feature type="transmembrane region" description="Helical" evidence="1">
    <location>
        <begin position="259"/>
        <end position="279"/>
    </location>
</feature>
<feature type="transmembrane region" description="Helical" evidence="1">
    <location>
        <begin position="282"/>
        <end position="302"/>
    </location>
</feature>
<feature type="transmembrane region" description="Helical" evidence="1">
    <location>
        <begin position="333"/>
        <end position="353"/>
    </location>
</feature>
<feature type="transmembrane region" description="Helical" evidence="1">
    <location>
        <begin position="405"/>
        <end position="425"/>
    </location>
</feature>
<feature type="transmembrane region" description="Helical" evidence="1">
    <location>
        <begin position="480"/>
        <end position="500"/>
    </location>
</feature>
<feature type="transmembrane region" description="Helical" evidence="1">
    <location>
        <begin position="531"/>
        <end position="551"/>
    </location>
</feature>
<feature type="transmembrane region" description="Helical" evidence="1">
    <location>
        <begin position="560"/>
        <end position="580"/>
    </location>
</feature>
<feature type="transmembrane region" description="Helical" evidence="1">
    <location>
        <begin position="592"/>
        <end position="612"/>
    </location>
</feature>
<feature type="transmembrane region" description="Helical" evidence="1">
    <location>
        <begin position="642"/>
        <end position="662"/>
    </location>
</feature>
<feature type="transmembrane region" description="Helical" evidence="1">
    <location>
        <begin position="711"/>
        <end position="731"/>
    </location>
</feature>
<feature type="transmembrane region" description="Helical" evidence="1">
    <location>
        <begin position="757"/>
        <end position="777"/>
    </location>
</feature>
<feature type="transmembrane region" description="Helical" evidence="1">
    <location>
        <begin position="791"/>
        <end position="811"/>
    </location>
</feature>
<feature type="region of interest" description="Disordered" evidence="2">
    <location>
        <begin position="1"/>
        <end position="116"/>
    </location>
</feature>
<feature type="coiled-coil region" evidence="1">
    <location>
        <begin position="105"/>
        <end position="134"/>
    </location>
</feature>
<feature type="compositionally biased region" description="Polar residues" evidence="2">
    <location>
        <begin position="1"/>
        <end position="14"/>
    </location>
</feature>
<feature type="compositionally biased region" description="Low complexity" evidence="2">
    <location>
        <begin position="33"/>
        <end position="68"/>
    </location>
</feature>
<feature type="compositionally biased region" description="Polar residues" evidence="2">
    <location>
        <begin position="74"/>
        <end position="92"/>
    </location>
</feature>
<feature type="modified residue" description="Phosphoserine" evidence="4">
    <location>
        <position position="93"/>
    </location>
</feature>
<feature type="glycosylation site" description="N-linked (GlcNAc...) asparagine" evidence="1">
    <location>
        <position position="32"/>
    </location>
</feature>
<feature type="glycosylation site" description="N-linked (GlcNAc...) asparagine" evidence="1">
    <location>
        <position position="77"/>
    </location>
</feature>
<feature type="glycosylation site" description="N-linked (GlcNAc...) asparagine" evidence="1">
    <location>
        <position position="109"/>
    </location>
</feature>
<feature type="glycosylation site" description="N-linked (GlcNAc...) asparagine" evidence="1">
    <location>
        <position position="256"/>
    </location>
</feature>
<feature type="glycosylation site" description="N-linked (GlcNAc...) asparagine" evidence="1">
    <location>
        <position position="452"/>
    </location>
</feature>
<feature type="glycosylation site" description="N-linked (GlcNAc...) asparagine" evidence="1">
    <location>
        <position position="464"/>
    </location>
</feature>
<feature type="glycosylation site" description="N-linked (GlcNAc...) asparagine" evidence="1">
    <location>
        <position position="691"/>
    </location>
</feature>
<feature type="glycosylation site" description="N-linked (GlcNAc...) asparagine" evidence="1">
    <location>
        <position position="843"/>
    </location>
</feature>
<gene>
    <name type="primary">pgt1</name>
    <name type="ORF">SPAC29B12.10c</name>
</gene>
<protein>
    <recommendedName>
        <fullName>Glutathione transporter 1</fullName>
    </recommendedName>
</protein>
<comment type="function">
    <text evidence="5">High-affinity glutathione transporter which plays a role in scavenging glutathione from the extracellular environment for the maintenance of sulfur homeostasis.</text>
</comment>
<comment type="biophysicochemical properties">
    <kinetics>
        <KM evidence="5">63 uM for glutathione</KM>
    </kinetics>
</comment>
<comment type="subcellular location">
    <subcellularLocation>
        <location>Endoplasmic reticulum membrane</location>
        <topology>Multi-pass membrane protein</topology>
    </subcellularLocation>
    <subcellularLocation>
        <location>Cell membrane</location>
        <topology>Multi-pass membrane protein</topology>
    </subcellularLocation>
</comment>
<comment type="induction">
    <text evidence="3 5">Expression is increased by cadmium ans repressed by cysteine.</text>
</comment>
<comment type="similarity">
    <text evidence="1">Belongs to the oligopeptide OPT transporter family.</text>
</comment>
<proteinExistence type="evidence at protein level"/>
<organism>
    <name type="scientific">Schizosaccharomyces pombe (strain 972 / ATCC 24843)</name>
    <name type="common">Fission yeast</name>
    <dbReference type="NCBI Taxonomy" id="284812"/>
    <lineage>
        <taxon>Eukaryota</taxon>
        <taxon>Fungi</taxon>
        <taxon>Dikarya</taxon>
        <taxon>Ascomycota</taxon>
        <taxon>Taphrinomycotina</taxon>
        <taxon>Schizosaccharomycetes</taxon>
        <taxon>Schizosaccharomycetales</taxon>
        <taxon>Schizosaccharomycetaceae</taxon>
        <taxon>Schizosaccharomyces</taxon>
    </lineage>
</organism>
<sequence length="851" mass="96302">MTARNSASIPTSIRKTSENEVSGDETPAGVGNLSTKTASKTSLTFRQSSSDESTSSYSGNHHNINIQHHPNRPFRTNSSSFSPNDYSISESPSKSKKDGVHVSAVQLDNETDSEVESEVEELERELEAIEDSVYPEVRAAVNPTDDVNLPVNTWRTWVLTTIFVIVFAAVNQFFSLRYPALSISFIVAQLILFPLGKLLNLLPNWKIGYGRFSFYLNSSPFNVKEHAAITIAVSLTSSTAYATNILSAQTSFYKQNLSWGYKILIVLTSQMLGYGFAGLTRRWIVYPAAMIWPQTLVSTVLFRTLHGNSGNDIGVLKNNRISANGWTISRYRFFAYVMIGSFVFYWFPGFIFKGLSYFTVLCWIWPKNRVVNQLFGYNSGLGILPLTFDWQQVVYNSNPLASPWWVICNTFGSVVLIFWIVVPILYYKGVWFSNYLPMLSSSTFDHTGVSYNSSRVLNSDYSFNHTKYESYSPLYMPMSYSMSTALNFAAVTAIFTHCALYNGKDIWQRLWKESGKDECIHRKLMRNYKEAPQWWYATLFIVVFGLTIFTVRYYDTQCPVWALIVALLIFIVNFIPQGVLEGITNQHVGLNIITELIGGYILPGKPLANLMIKLYGFIPMRQGLEFSRDLKLAQYMKIPPRILFFVQLFATILGGITQVAVQEWMNYHIPGICTTSQSNGFTCPNGRSIYNASLIWGAIGPAKMFSKGKPYYPLIFFFLIGAVAPFITWGLRKRFPKSWIGKLNAPVLFTGPGNIPPATGINYSSWAIVGFIFNYVIRKRAIHWWRKYNYVLAAAMDSGVAVAGVVIFLCVSYPGGKITWWGNTVYTKTYDWKSVPYRSLGPNETFGYTNW</sequence>
<accession>O14031</accession>
<dbReference type="EMBL" id="CU329670">
    <property type="protein sequence ID" value="CAB16254.1"/>
    <property type="molecule type" value="Genomic_DNA"/>
</dbReference>
<dbReference type="PIR" id="T38497">
    <property type="entry name" value="T38497"/>
</dbReference>
<dbReference type="RefSeq" id="NP_594987.1">
    <property type="nucleotide sequence ID" value="NM_001020418.2"/>
</dbReference>
<dbReference type="BioGRID" id="278559">
    <property type="interactions" value="31"/>
</dbReference>
<dbReference type="FunCoup" id="O14031">
    <property type="interactions" value="73"/>
</dbReference>
<dbReference type="STRING" id="284812.O14031"/>
<dbReference type="TCDB" id="2.A.67.1.5">
    <property type="family name" value="the oligopeptide transporter (opt) family"/>
</dbReference>
<dbReference type="GlyCosmos" id="O14031">
    <property type="glycosylation" value="8 sites, No reported glycans"/>
</dbReference>
<dbReference type="iPTMnet" id="O14031"/>
<dbReference type="PaxDb" id="4896-SPAC29B12.10c.1"/>
<dbReference type="EnsemblFungi" id="SPAC29B12.10c.1">
    <property type="protein sequence ID" value="SPAC29B12.10c.1:pep"/>
    <property type="gene ID" value="SPAC29B12.10c"/>
</dbReference>
<dbReference type="GeneID" id="2542082"/>
<dbReference type="KEGG" id="spo:2542082"/>
<dbReference type="PomBase" id="SPAC29B12.10c">
    <property type="gene designation" value="pgt1"/>
</dbReference>
<dbReference type="VEuPathDB" id="FungiDB:SPAC29B12.10c"/>
<dbReference type="eggNOG" id="KOG2262">
    <property type="taxonomic scope" value="Eukaryota"/>
</dbReference>
<dbReference type="HOGENOM" id="CLU_004965_1_1_1"/>
<dbReference type="InParanoid" id="O14031"/>
<dbReference type="OMA" id="RWIVYPA"/>
<dbReference type="PhylomeDB" id="O14031"/>
<dbReference type="PRO" id="PR:O14031"/>
<dbReference type="Proteomes" id="UP000002485">
    <property type="component" value="Chromosome I"/>
</dbReference>
<dbReference type="GO" id="GO:0005789">
    <property type="term" value="C:endoplasmic reticulum membrane"/>
    <property type="evidence" value="ECO:0007669"/>
    <property type="project" value="UniProtKB-SubCell"/>
</dbReference>
<dbReference type="GO" id="GO:0005886">
    <property type="term" value="C:plasma membrane"/>
    <property type="evidence" value="ECO:0000314"/>
    <property type="project" value="PomBase"/>
</dbReference>
<dbReference type="GO" id="GO:0031520">
    <property type="term" value="C:plasma membrane of cell tip"/>
    <property type="evidence" value="ECO:0000314"/>
    <property type="project" value="PomBase"/>
</dbReference>
<dbReference type="GO" id="GO:0034634">
    <property type="term" value="F:glutathione transmembrane transporter activity"/>
    <property type="evidence" value="ECO:0000314"/>
    <property type="project" value="PomBase"/>
</dbReference>
<dbReference type="GO" id="GO:0035673">
    <property type="term" value="F:oligopeptide transmembrane transporter activity"/>
    <property type="evidence" value="ECO:0000318"/>
    <property type="project" value="GO_Central"/>
</dbReference>
<dbReference type="GO" id="GO:0098709">
    <property type="term" value="P:glutathione import across plasma membrane"/>
    <property type="evidence" value="ECO:0000314"/>
    <property type="project" value="PomBase"/>
</dbReference>
<dbReference type="GO" id="GO:0034775">
    <property type="term" value="P:glutathione transmembrane transport"/>
    <property type="evidence" value="ECO:0000314"/>
    <property type="project" value="PomBase"/>
</dbReference>
<dbReference type="GO" id="GO:0015031">
    <property type="term" value="P:protein transport"/>
    <property type="evidence" value="ECO:0007669"/>
    <property type="project" value="UniProtKB-KW"/>
</dbReference>
<dbReference type="InterPro" id="IPR004648">
    <property type="entry name" value="Oligpept_transpt"/>
</dbReference>
<dbReference type="InterPro" id="IPR004813">
    <property type="entry name" value="OPT"/>
</dbReference>
<dbReference type="NCBIfam" id="TIGR00727">
    <property type="entry name" value="ISP4_OPT"/>
    <property type="match status" value="1"/>
</dbReference>
<dbReference type="NCBIfam" id="TIGR00728">
    <property type="entry name" value="OPT_sfam"/>
    <property type="match status" value="1"/>
</dbReference>
<dbReference type="PANTHER" id="PTHR22601">
    <property type="entry name" value="ISP4 LIKE PROTEIN"/>
    <property type="match status" value="1"/>
</dbReference>
<dbReference type="Pfam" id="PF03169">
    <property type="entry name" value="OPT"/>
    <property type="match status" value="1"/>
</dbReference>
<name>PGT1_SCHPO</name>
<evidence type="ECO:0000255" key="1"/>
<evidence type="ECO:0000256" key="2">
    <source>
        <dbReference type="SAM" id="MobiDB-lite"/>
    </source>
</evidence>
<evidence type="ECO:0000269" key="3">
    <source>
    </source>
</evidence>
<evidence type="ECO:0000269" key="4">
    <source>
    </source>
</evidence>
<evidence type="ECO:0000269" key="5">
    <source>
    </source>
</evidence>
<evidence type="ECO:0000305" key="6"/>
<evidence type="ECO:0000312" key="7">
    <source>
        <dbReference type="EMBL" id="CAB16254.1"/>
    </source>
</evidence>
<reference evidence="7" key="1">
    <citation type="journal article" date="2002" name="Nature">
        <title>The genome sequence of Schizosaccharomyces pombe.</title>
        <authorList>
            <person name="Wood V."/>
            <person name="Gwilliam R."/>
            <person name="Rajandream M.A."/>
            <person name="Lyne M.H."/>
            <person name="Lyne R."/>
            <person name="Stewart A."/>
            <person name="Sgouros J.G."/>
            <person name="Peat N."/>
            <person name="Hayles J."/>
            <person name="Baker S.G."/>
            <person name="Basham D."/>
            <person name="Bowman S."/>
            <person name="Brooks K."/>
            <person name="Brown D."/>
            <person name="Brown S."/>
            <person name="Chillingworth T."/>
            <person name="Churcher C.M."/>
            <person name="Collins M."/>
            <person name="Connor R."/>
            <person name="Cronin A."/>
            <person name="Davis P."/>
            <person name="Feltwell T."/>
            <person name="Fraser A."/>
            <person name="Gentles S."/>
            <person name="Goble A."/>
            <person name="Hamlin N."/>
            <person name="Harris D.E."/>
            <person name="Hidalgo J."/>
            <person name="Hodgson G."/>
            <person name="Holroyd S."/>
            <person name="Hornsby T."/>
            <person name="Howarth S."/>
            <person name="Huckle E.J."/>
            <person name="Hunt S."/>
            <person name="Jagels K."/>
            <person name="James K.D."/>
            <person name="Jones L."/>
            <person name="Jones M."/>
            <person name="Leather S."/>
            <person name="McDonald S."/>
            <person name="McLean J."/>
            <person name="Mooney P."/>
            <person name="Moule S."/>
            <person name="Mungall K.L."/>
            <person name="Murphy L.D."/>
            <person name="Niblett D."/>
            <person name="Odell C."/>
            <person name="Oliver K."/>
            <person name="O'Neil S."/>
            <person name="Pearson D."/>
            <person name="Quail M.A."/>
            <person name="Rabbinowitsch E."/>
            <person name="Rutherford K.M."/>
            <person name="Rutter S."/>
            <person name="Saunders D."/>
            <person name="Seeger K."/>
            <person name="Sharp S."/>
            <person name="Skelton J."/>
            <person name="Simmonds M.N."/>
            <person name="Squares R."/>
            <person name="Squares S."/>
            <person name="Stevens K."/>
            <person name="Taylor K."/>
            <person name="Taylor R.G."/>
            <person name="Tivey A."/>
            <person name="Walsh S.V."/>
            <person name="Warren T."/>
            <person name="Whitehead S."/>
            <person name="Woodward J.R."/>
            <person name="Volckaert G."/>
            <person name="Aert R."/>
            <person name="Robben J."/>
            <person name="Grymonprez B."/>
            <person name="Weltjens I."/>
            <person name="Vanstreels E."/>
            <person name="Rieger M."/>
            <person name="Schaefer M."/>
            <person name="Mueller-Auer S."/>
            <person name="Gabel C."/>
            <person name="Fuchs M."/>
            <person name="Duesterhoeft A."/>
            <person name="Fritzc C."/>
            <person name="Holzer E."/>
            <person name="Moestl D."/>
            <person name="Hilbert H."/>
            <person name="Borzym K."/>
            <person name="Langer I."/>
            <person name="Beck A."/>
            <person name="Lehrach H."/>
            <person name="Reinhardt R."/>
            <person name="Pohl T.M."/>
            <person name="Eger P."/>
            <person name="Zimmermann W."/>
            <person name="Wedler H."/>
            <person name="Wambutt R."/>
            <person name="Purnelle B."/>
            <person name="Goffeau A."/>
            <person name="Cadieu E."/>
            <person name="Dreano S."/>
            <person name="Gloux S."/>
            <person name="Lelaure V."/>
            <person name="Mottier S."/>
            <person name="Galibert F."/>
            <person name="Aves S.J."/>
            <person name="Xiang Z."/>
            <person name="Hunt C."/>
            <person name="Moore K."/>
            <person name="Hurst S.M."/>
            <person name="Lucas M."/>
            <person name="Rochet M."/>
            <person name="Gaillardin C."/>
            <person name="Tallada V.A."/>
            <person name="Garzon A."/>
            <person name="Thode G."/>
            <person name="Daga R.R."/>
            <person name="Cruzado L."/>
            <person name="Jimenez J."/>
            <person name="Sanchez M."/>
            <person name="del Rey F."/>
            <person name="Benito J."/>
            <person name="Dominguez A."/>
            <person name="Revuelta J.L."/>
            <person name="Moreno S."/>
            <person name="Armstrong J."/>
            <person name="Forsburg S.L."/>
            <person name="Cerutti L."/>
            <person name="Lowe T."/>
            <person name="McCombie W.R."/>
            <person name="Paulsen I."/>
            <person name="Potashkin J."/>
            <person name="Shpakovski G.V."/>
            <person name="Ussery D."/>
            <person name="Barrell B.G."/>
            <person name="Nurse P."/>
        </authorList>
    </citation>
    <scope>NUCLEOTIDE SEQUENCE [LARGE SCALE GENOMIC DNA]</scope>
    <source>
        <strain>972 / ATCC 24843</strain>
    </source>
</reference>
<reference key="2">
    <citation type="journal article" date="2003" name="Mol. Biol. Cell">
        <title>Global transcriptional responses of fission yeast to environmental stress.</title>
        <authorList>
            <person name="Chen D."/>
            <person name="Toone W.M."/>
            <person name="Mata J."/>
            <person name="Lyne R."/>
            <person name="Burns G."/>
            <person name="Kivinen K."/>
            <person name="Brazma A."/>
            <person name="Jones N."/>
            <person name="Baehler J."/>
        </authorList>
    </citation>
    <scope>INDUCTION</scope>
</reference>
<reference evidence="6" key="3">
    <citation type="journal article" date="2006" name="Nat. Biotechnol.">
        <title>ORFeome cloning and global analysis of protein localization in the fission yeast Schizosaccharomyces pombe.</title>
        <authorList>
            <person name="Matsuyama A."/>
            <person name="Arai R."/>
            <person name="Yashiroda Y."/>
            <person name="Shirai A."/>
            <person name="Kamata A."/>
            <person name="Sekido S."/>
            <person name="Kobayashi Y."/>
            <person name="Hashimoto A."/>
            <person name="Hamamoto M."/>
            <person name="Hiraoka Y."/>
            <person name="Horinouchi S."/>
            <person name="Yoshida M."/>
        </authorList>
    </citation>
    <scope>SUBCELLULAR LOCATION [LARGE SCALE ANALYSIS]</scope>
</reference>
<reference key="4">
    <citation type="journal article" date="2008" name="FEMS Yeast Res.">
        <title>Pgt1, a glutathione transporter from the fission yeast Schizosaccharomyces pombe.</title>
        <authorList>
            <person name="Thakur A."/>
            <person name="Kaur J."/>
            <person name="Bachhawat A.K."/>
        </authorList>
    </citation>
    <scope>FUNCTION</scope>
    <scope>BIOPHYSICOCHEMICAL PROPERTIES</scope>
    <scope>INDUCTION</scope>
    <scope>SUBCELLULAR LOCATION</scope>
</reference>
<reference key="5">
    <citation type="journal article" date="2008" name="J. Proteome Res.">
        <title>Phosphoproteome analysis of fission yeast.</title>
        <authorList>
            <person name="Wilson-Grady J.T."/>
            <person name="Villen J."/>
            <person name="Gygi S.P."/>
        </authorList>
    </citation>
    <scope>PHOSPHORYLATION [LARGE SCALE ANALYSIS] AT SER-93</scope>
    <scope>IDENTIFICATION BY MASS SPECTROMETRY</scope>
</reference>
<keyword id="KW-1003">Cell membrane</keyword>
<keyword id="KW-0175">Coiled coil</keyword>
<keyword id="KW-0256">Endoplasmic reticulum</keyword>
<keyword id="KW-0325">Glycoprotein</keyword>
<keyword id="KW-0472">Membrane</keyword>
<keyword id="KW-0571">Peptide transport</keyword>
<keyword id="KW-0597">Phosphoprotein</keyword>
<keyword id="KW-0653">Protein transport</keyword>
<keyword id="KW-1185">Reference proteome</keyword>
<keyword id="KW-0812">Transmembrane</keyword>
<keyword id="KW-1133">Transmembrane helix</keyword>
<keyword id="KW-0813">Transport</keyword>